<reference key="1">
    <citation type="journal article" date="2000" name="DNA Cell Biol.">
        <title>The gene encoding the 17-kDa antigen of Bartonella henselae is located within a cluster of genes homologous to the virB virulence operon.</title>
        <authorList>
            <person name="Padmalayam I."/>
            <person name="Karem K."/>
            <person name="Baumstark B.R."/>
            <person name="Massung R."/>
        </authorList>
    </citation>
    <scope>NUCLEOTIDE SEQUENCE [GENOMIC DNA]</scope>
    <source>
        <strain>ATCC 49882 / DSM 28221 / CCUG 30454 / Houston 1</strain>
    </source>
</reference>
<reference key="2">
    <citation type="journal article" date="2004" name="Proc. Natl. Acad. Sci. U.S.A.">
        <title>The louse-borne human pathogen Bartonella quintana is a genomic derivative of the zoonotic agent Bartonella henselae.</title>
        <authorList>
            <person name="Alsmark U.C.M."/>
            <person name="Frank A.C."/>
            <person name="Karlberg E.O."/>
            <person name="Legault B.-A."/>
            <person name="Ardell D.H."/>
            <person name="Canbaeck B."/>
            <person name="Eriksson A.-S."/>
            <person name="Naeslund A.K."/>
            <person name="Handley S.A."/>
            <person name="Huvet M."/>
            <person name="La Scola B."/>
            <person name="Holmberg M."/>
            <person name="Andersson S.G.E."/>
        </authorList>
    </citation>
    <scope>NUCLEOTIDE SEQUENCE [LARGE SCALE GENOMIC DNA]</scope>
    <source>
        <strain>ATCC 49882 / DSM 28221 / CCUG 30454 / Houston 1</strain>
    </source>
</reference>
<reference key="3">
    <citation type="journal article" date="2001" name="Infect. Immun.">
        <title>Intracellular induction of the Bartonella henselae virB operon by human endothelial cells.</title>
        <authorList>
            <person name="Schmiederer M."/>
            <person name="Arcenas R."/>
            <person name="Widen R."/>
            <person name="Valkov N."/>
            <person name="Anderson B.E."/>
        </authorList>
    </citation>
    <scope>INDUCTION</scope>
    <source>
        <strain>ATCC 49882 / DSM 28221 / CCUG 30454 / Houston 1</strain>
    </source>
</reference>
<reference key="4">
    <citation type="journal article" date="2004" name="Mol. Microbiol.">
        <title>The VirB type IV secretion system of Bartonella henselae mediates invasion, proinflammatory activation and antiapoptotic protection of endothelial cells.</title>
        <authorList>
            <person name="Schmid M.C."/>
            <person name="Schulein R."/>
            <person name="Dehio M."/>
            <person name="Denecker G."/>
            <person name="Carena I."/>
            <person name="Dehio C."/>
        </authorList>
    </citation>
    <scope>FUNCTION</scope>
    <source>
        <strain>ATCC 49882 / DSM 28221 / CCUG 30454 / Houston 1</strain>
    </source>
</reference>
<reference key="5">
    <citation type="journal article" date="2005" name="Proc. Natl. Acad. Sci. U.S.A.">
        <title>A bipartite signal mediates the transfer of type IV secretion substrates of Bartonella henselae into human cells.</title>
        <authorList>
            <person name="Schulein R."/>
            <person name="Guye P."/>
            <person name="Rhomberg T.A."/>
            <person name="Schmid M.C."/>
            <person name="Schroeder G."/>
            <person name="Vergunst A.C."/>
            <person name="Carena I."/>
            <person name="Dehio C."/>
        </authorList>
    </citation>
    <scope>FUNCTION</scope>
    <source>
        <strain>ATCC 49882 / DSM 28221 / CCUG 30454 / Houston 1</strain>
    </source>
</reference>
<proteinExistence type="evidence at transcript level"/>
<sequence>MSDFSFSPFESISGYILQPLNNVMNTTVSGLSSAISAPLNLASIIFIFLYGYNVMTGRVALSMNSLLNNVVKIVIVTTMATNADTFNTYVKNIFFGDLANAIGNALNSNPSSANVFDYILLKTSARYQEVLAAAWFLEKIMVGLLGSLMIMAVIVFCIGGFIVQMFAQVALVMIIGLGPLFISLYLFNATRKFTDAWITTLVNFTILQVLVIMLGTIMCKIILYVLDGTYESIYFLFPPVVVISIVGAILFRALPGIASALSSGGPYFNAGISSGGQIFTMLSSGAKTGRNAAKSAASTLSGAAGTATKAAKIGGNGRGRF</sequence>
<organism>
    <name type="scientific">Bartonella henselae (strain ATCC 49882 / DSM 28221 / CCUG 30454 / Houston 1)</name>
    <name type="common">Rochalimaea henselae</name>
    <dbReference type="NCBI Taxonomy" id="283166"/>
    <lineage>
        <taxon>Bacteria</taxon>
        <taxon>Pseudomonadati</taxon>
        <taxon>Pseudomonadota</taxon>
        <taxon>Alphaproteobacteria</taxon>
        <taxon>Hyphomicrobiales</taxon>
        <taxon>Bartonellaceae</taxon>
        <taxon>Bartonella</taxon>
    </lineage>
</organism>
<dbReference type="EMBL" id="AF182718">
    <property type="protein sequence ID" value="AAF00944.1"/>
    <property type="molecule type" value="Genomic_DNA"/>
</dbReference>
<dbReference type="EMBL" id="BX897699">
    <property type="protein sequence ID" value="CAF28103.1"/>
    <property type="molecule type" value="Genomic_DNA"/>
</dbReference>
<dbReference type="RefSeq" id="WP_011181131.1">
    <property type="nucleotide sequence ID" value="NZ_LRIJ02000001.1"/>
</dbReference>
<dbReference type="SMR" id="Q9RND2"/>
<dbReference type="PaxDb" id="283166-BH13300"/>
<dbReference type="EnsemblBacteria" id="CAF28103">
    <property type="protein sequence ID" value="CAF28103"/>
    <property type="gene ID" value="BH13300"/>
</dbReference>
<dbReference type="GeneID" id="92985941"/>
<dbReference type="KEGG" id="bhe:BH13300"/>
<dbReference type="eggNOG" id="COG3704">
    <property type="taxonomic scope" value="Bacteria"/>
</dbReference>
<dbReference type="OrthoDB" id="7854576at2"/>
<dbReference type="Proteomes" id="UP000000421">
    <property type="component" value="Chromosome"/>
</dbReference>
<dbReference type="GO" id="GO:0005886">
    <property type="term" value="C:plasma membrane"/>
    <property type="evidence" value="ECO:0007669"/>
    <property type="project" value="UniProtKB-SubCell"/>
</dbReference>
<dbReference type="GO" id="GO:0030255">
    <property type="term" value="P:protein secretion by the type IV secretion system"/>
    <property type="evidence" value="ECO:0007669"/>
    <property type="project" value="InterPro"/>
</dbReference>
<dbReference type="InterPro" id="IPR007688">
    <property type="entry name" value="Conjugal_tfr_TrbL/VirB6"/>
</dbReference>
<dbReference type="Pfam" id="PF04610">
    <property type="entry name" value="TrbL"/>
    <property type="match status" value="1"/>
</dbReference>
<gene>
    <name type="primary">virB6</name>
    <name type="ordered locus">BH13300</name>
</gene>
<protein>
    <recommendedName>
        <fullName>Type IV secretion system protein VirB6</fullName>
    </recommendedName>
</protein>
<feature type="chain" id="PRO_0000273530" description="Type IV secretion system protein VirB6">
    <location>
        <begin position="1"/>
        <end position="321"/>
    </location>
</feature>
<feature type="transmembrane region" description="Helical" evidence="1">
    <location>
        <begin position="30"/>
        <end position="50"/>
    </location>
</feature>
<feature type="transmembrane region" description="Helical" evidence="1">
    <location>
        <begin position="59"/>
        <end position="79"/>
    </location>
</feature>
<feature type="transmembrane region" description="Helical" evidence="1">
    <location>
        <begin position="142"/>
        <end position="162"/>
    </location>
</feature>
<feature type="transmembrane region" description="Helical" evidence="1">
    <location>
        <begin position="169"/>
        <end position="189"/>
    </location>
</feature>
<feature type="transmembrane region" description="Helical" evidence="1">
    <location>
        <begin position="206"/>
        <end position="226"/>
    </location>
</feature>
<feature type="transmembrane region" description="Helical" evidence="1">
    <location>
        <begin position="231"/>
        <end position="251"/>
    </location>
</feature>
<keyword id="KW-0997">Cell inner membrane</keyword>
<keyword id="KW-1003">Cell membrane</keyword>
<keyword id="KW-0472">Membrane</keyword>
<keyword id="KW-0812">Transmembrane</keyword>
<keyword id="KW-1133">Transmembrane helix</keyword>
<keyword id="KW-0813">Transport</keyword>
<keyword id="KW-0843">Virulence</keyword>
<name>VIRB6_BARHE</name>
<comment type="function">
    <text evidence="3 4">The type IV secretion system VirB/VirD4 is a major virulence determinant for subversion of human endothelial cell (HEC) function. VirB-dependent changes of HEC include massive cytoskeletal rearrangements, a pro-inflammatory activation by nuclear factor NF-kappa-B, inhibition of early and late events of apoptosis, leading to an increased cell survival, and, at high infection doses, a cytostatic or cytotoxic effect, which interferes with a potent VirB-independent mitogenic activity. These changes of HEC require the T4S coupling protein VirD4 and at least one of the effector proteins BepA-G.</text>
</comment>
<comment type="subcellular location">
    <subcellularLocation>
        <location evidence="5">Cell inner membrane</location>
        <topology evidence="5">Multi-pass membrane protein</topology>
    </subcellularLocation>
</comment>
<comment type="induction">
    <text evidence="2">During the interaction with the intracellular environment of host cells.</text>
</comment>
<comment type="similarity">
    <text evidence="5">Belongs to the TrbL/VirB6 family.</text>
</comment>
<accession>Q9RND2</accession>
<evidence type="ECO:0000255" key="1"/>
<evidence type="ECO:0000269" key="2">
    <source>
    </source>
</evidence>
<evidence type="ECO:0000269" key="3">
    <source>
    </source>
</evidence>
<evidence type="ECO:0000269" key="4">
    <source>
    </source>
</evidence>
<evidence type="ECO:0000305" key="5"/>